<gene>
    <name evidence="1" type="primary">ligA</name>
    <name type="ordered locus">YPA_2178</name>
</gene>
<dbReference type="EC" id="6.5.1.2" evidence="1"/>
<dbReference type="EMBL" id="CP000308">
    <property type="protein sequence ID" value="ABG14143.1"/>
    <property type="molecule type" value="Genomic_DNA"/>
</dbReference>
<dbReference type="RefSeq" id="WP_002213368.1">
    <property type="nucleotide sequence ID" value="NZ_CP009906.1"/>
</dbReference>
<dbReference type="SMR" id="Q1C5X9"/>
<dbReference type="GeneID" id="57975709"/>
<dbReference type="KEGG" id="ypa:YPA_2178"/>
<dbReference type="Proteomes" id="UP000001971">
    <property type="component" value="Chromosome"/>
</dbReference>
<dbReference type="GO" id="GO:0005829">
    <property type="term" value="C:cytosol"/>
    <property type="evidence" value="ECO:0007669"/>
    <property type="project" value="TreeGrafter"/>
</dbReference>
<dbReference type="GO" id="GO:0003677">
    <property type="term" value="F:DNA binding"/>
    <property type="evidence" value="ECO:0007669"/>
    <property type="project" value="InterPro"/>
</dbReference>
<dbReference type="GO" id="GO:0003911">
    <property type="term" value="F:DNA ligase (NAD+) activity"/>
    <property type="evidence" value="ECO:0007669"/>
    <property type="project" value="UniProtKB-UniRule"/>
</dbReference>
<dbReference type="GO" id="GO:0046872">
    <property type="term" value="F:metal ion binding"/>
    <property type="evidence" value="ECO:0007669"/>
    <property type="project" value="UniProtKB-KW"/>
</dbReference>
<dbReference type="GO" id="GO:0006281">
    <property type="term" value="P:DNA repair"/>
    <property type="evidence" value="ECO:0007669"/>
    <property type="project" value="UniProtKB-KW"/>
</dbReference>
<dbReference type="GO" id="GO:0006260">
    <property type="term" value="P:DNA replication"/>
    <property type="evidence" value="ECO:0007669"/>
    <property type="project" value="UniProtKB-KW"/>
</dbReference>
<dbReference type="CDD" id="cd17748">
    <property type="entry name" value="BRCT_DNA_ligase_like"/>
    <property type="match status" value="1"/>
</dbReference>
<dbReference type="CDD" id="cd00114">
    <property type="entry name" value="LIGANc"/>
    <property type="match status" value="1"/>
</dbReference>
<dbReference type="FunFam" id="1.10.150.20:FF:000006">
    <property type="entry name" value="DNA ligase"/>
    <property type="match status" value="1"/>
</dbReference>
<dbReference type="FunFam" id="1.10.150.20:FF:000007">
    <property type="entry name" value="DNA ligase"/>
    <property type="match status" value="1"/>
</dbReference>
<dbReference type="FunFam" id="1.10.287.610:FF:000002">
    <property type="entry name" value="DNA ligase"/>
    <property type="match status" value="1"/>
</dbReference>
<dbReference type="FunFam" id="2.40.50.140:FF:000012">
    <property type="entry name" value="DNA ligase"/>
    <property type="match status" value="1"/>
</dbReference>
<dbReference type="FunFam" id="3.30.470.30:FF:000001">
    <property type="entry name" value="DNA ligase"/>
    <property type="match status" value="1"/>
</dbReference>
<dbReference type="FunFam" id="3.40.50.10190:FF:000004">
    <property type="entry name" value="DNA ligase"/>
    <property type="match status" value="1"/>
</dbReference>
<dbReference type="FunFam" id="6.20.10.30:FF:000001">
    <property type="entry name" value="DNA ligase"/>
    <property type="match status" value="1"/>
</dbReference>
<dbReference type="Gene3D" id="6.20.10.30">
    <property type="match status" value="1"/>
</dbReference>
<dbReference type="Gene3D" id="1.10.150.20">
    <property type="entry name" value="5' to 3' exonuclease, C-terminal subdomain"/>
    <property type="match status" value="2"/>
</dbReference>
<dbReference type="Gene3D" id="3.40.50.10190">
    <property type="entry name" value="BRCT domain"/>
    <property type="match status" value="1"/>
</dbReference>
<dbReference type="Gene3D" id="3.30.470.30">
    <property type="entry name" value="DNA ligase/mRNA capping enzyme"/>
    <property type="match status" value="1"/>
</dbReference>
<dbReference type="Gene3D" id="1.10.287.610">
    <property type="entry name" value="Helix hairpin bin"/>
    <property type="match status" value="1"/>
</dbReference>
<dbReference type="Gene3D" id="2.40.50.140">
    <property type="entry name" value="Nucleic acid-binding proteins"/>
    <property type="match status" value="1"/>
</dbReference>
<dbReference type="HAMAP" id="MF_01588">
    <property type="entry name" value="DNA_ligase_A"/>
    <property type="match status" value="1"/>
</dbReference>
<dbReference type="InterPro" id="IPR001357">
    <property type="entry name" value="BRCT_dom"/>
</dbReference>
<dbReference type="InterPro" id="IPR036420">
    <property type="entry name" value="BRCT_dom_sf"/>
</dbReference>
<dbReference type="InterPro" id="IPR041663">
    <property type="entry name" value="DisA/LigA_HHH"/>
</dbReference>
<dbReference type="InterPro" id="IPR001679">
    <property type="entry name" value="DNA_ligase"/>
</dbReference>
<dbReference type="InterPro" id="IPR018239">
    <property type="entry name" value="DNA_ligase_AS"/>
</dbReference>
<dbReference type="InterPro" id="IPR033136">
    <property type="entry name" value="DNA_ligase_CS"/>
</dbReference>
<dbReference type="InterPro" id="IPR013839">
    <property type="entry name" value="DNAligase_adenylation"/>
</dbReference>
<dbReference type="InterPro" id="IPR013840">
    <property type="entry name" value="DNAligase_N"/>
</dbReference>
<dbReference type="InterPro" id="IPR003583">
    <property type="entry name" value="Hlx-hairpin-Hlx_DNA-bd_motif"/>
</dbReference>
<dbReference type="InterPro" id="IPR012340">
    <property type="entry name" value="NA-bd_OB-fold"/>
</dbReference>
<dbReference type="InterPro" id="IPR004150">
    <property type="entry name" value="NAD_DNA_ligase_OB"/>
</dbReference>
<dbReference type="InterPro" id="IPR010994">
    <property type="entry name" value="RuvA_2-like"/>
</dbReference>
<dbReference type="InterPro" id="IPR004149">
    <property type="entry name" value="Znf_DNAligase_C4"/>
</dbReference>
<dbReference type="NCBIfam" id="TIGR00575">
    <property type="entry name" value="dnlj"/>
    <property type="match status" value="1"/>
</dbReference>
<dbReference type="NCBIfam" id="NF005932">
    <property type="entry name" value="PRK07956.1"/>
    <property type="match status" value="1"/>
</dbReference>
<dbReference type="PANTHER" id="PTHR23389">
    <property type="entry name" value="CHROMOSOME TRANSMISSION FIDELITY FACTOR 18"/>
    <property type="match status" value="1"/>
</dbReference>
<dbReference type="PANTHER" id="PTHR23389:SF9">
    <property type="entry name" value="DNA LIGASE"/>
    <property type="match status" value="1"/>
</dbReference>
<dbReference type="Pfam" id="PF00533">
    <property type="entry name" value="BRCT"/>
    <property type="match status" value="1"/>
</dbReference>
<dbReference type="Pfam" id="PF01653">
    <property type="entry name" value="DNA_ligase_aden"/>
    <property type="match status" value="1"/>
</dbReference>
<dbReference type="Pfam" id="PF03120">
    <property type="entry name" value="DNA_ligase_OB"/>
    <property type="match status" value="1"/>
</dbReference>
<dbReference type="Pfam" id="PF03119">
    <property type="entry name" value="DNA_ligase_ZBD"/>
    <property type="match status" value="1"/>
</dbReference>
<dbReference type="Pfam" id="PF12826">
    <property type="entry name" value="HHH_2"/>
    <property type="match status" value="1"/>
</dbReference>
<dbReference type="Pfam" id="PF14520">
    <property type="entry name" value="HHH_5"/>
    <property type="match status" value="1"/>
</dbReference>
<dbReference type="Pfam" id="PF22745">
    <property type="entry name" value="Nlig-Ia"/>
    <property type="match status" value="1"/>
</dbReference>
<dbReference type="PIRSF" id="PIRSF001604">
    <property type="entry name" value="LigA"/>
    <property type="match status" value="1"/>
</dbReference>
<dbReference type="SMART" id="SM00292">
    <property type="entry name" value="BRCT"/>
    <property type="match status" value="1"/>
</dbReference>
<dbReference type="SMART" id="SM00278">
    <property type="entry name" value="HhH1"/>
    <property type="match status" value="4"/>
</dbReference>
<dbReference type="SMART" id="SM00532">
    <property type="entry name" value="LIGANc"/>
    <property type="match status" value="1"/>
</dbReference>
<dbReference type="SUPFAM" id="SSF52113">
    <property type="entry name" value="BRCT domain"/>
    <property type="match status" value="1"/>
</dbReference>
<dbReference type="SUPFAM" id="SSF56091">
    <property type="entry name" value="DNA ligase/mRNA capping enzyme, catalytic domain"/>
    <property type="match status" value="1"/>
</dbReference>
<dbReference type="SUPFAM" id="SSF50249">
    <property type="entry name" value="Nucleic acid-binding proteins"/>
    <property type="match status" value="1"/>
</dbReference>
<dbReference type="SUPFAM" id="SSF47781">
    <property type="entry name" value="RuvA domain 2-like"/>
    <property type="match status" value="1"/>
</dbReference>
<dbReference type="PROSITE" id="PS50172">
    <property type="entry name" value="BRCT"/>
    <property type="match status" value="1"/>
</dbReference>
<dbReference type="PROSITE" id="PS01055">
    <property type="entry name" value="DNA_LIGASE_N1"/>
    <property type="match status" value="1"/>
</dbReference>
<dbReference type="PROSITE" id="PS01056">
    <property type="entry name" value="DNA_LIGASE_N2"/>
    <property type="match status" value="1"/>
</dbReference>
<proteinExistence type="inferred from homology"/>
<reference key="1">
    <citation type="journal article" date="2006" name="J. Bacteriol.">
        <title>Complete genome sequence of Yersinia pestis strains Antiqua and Nepal516: evidence of gene reduction in an emerging pathogen.</title>
        <authorList>
            <person name="Chain P.S.G."/>
            <person name="Hu P."/>
            <person name="Malfatti S.A."/>
            <person name="Radnedge L."/>
            <person name="Larimer F."/>
            <person name="Vergez L.M."/>
            <person name="Worsham P."/>
            <person name="Chu M.C."/>
            <person name="Andersen G.L."/>
        </authorList>
    </citation>
    <scope>NUCLEOTIDE SEQUENCE [LARGE SCALE GENOMIC DNA]</scope>
    <source>
        <strain>Antiqua</strain>
    </source>
</reference>
<sequence length="670" mass="73898">MESIIQQINQLRTSLRHHEHQYHVLDAPEIPDAEYDRMMQQLRDLEAQHPELVTNDSPTQRVGAAPLDAFEQVKHEVPMLSLDNVFDEESYLAFDKRVHDRLKTAEPLTFCCELKLDGLAVSLLYENGELVRAATRGDGTTGENITANVRTIRAIPLRLHGDNVPRRVEVRGEVFMPQAGFEQLNEEARRKGGKVFANPRNAAAGSLRQLDPRITAKRPLTFFCYGVGLLDGGELPRSHIQCLMQFKAWGLPVSERVKLCTGSDQVIAFYRQIEQDRAGLGFDIDGVVIKVDDLALQEQLGFVARAPRWATAFKFPAQEQITQVREVEFQVGRTGAITPVARLEPVQVAGVIVSNATLHNADEIERLGLRIGDTVIVRRAGDVIPQVVGVVMEQRPDDTKEITFPSQCPVCGSDIERVEGEAVARCTGGLFCAAQRKEALKHFVSRRALDVDGMGDKIIEQLVEKQYVENPADLFQLTAGKLTGLDRMGPKSAQNLIAALEKAKQTTFARFLYALGIREVGEATAANLAAHFRTLDNLRAADIETLKSVPDVGEVVAKHVMNFLSEEHNQKVIEELEKVVSWPEPQQIVVEESDSPFAGKTVVLTGSLTILSRDEAKDRLTALGAKVSGSVSKKTHLVIAGEAAGSKLAKAQELGIKVIDEAEMIRLLGE</sequence>
<accession>Q1C5X9</accession>
<name>DNLJ_YERPA</name>
<evidence type="ECO:0000255" key="1">
    <source>
        <dbReference type="HAMAP-Rule" id="MF_01588"/>
    </source>
</evidence>
<protein>
    <recommendedName>
        <fullName evidence="1">DNA ligase</fullName>
        <ecNumber evidence="1">6.5.1.2</ecNumber>
    </recommendedName>
    <alternativeName>
        <fullName evidence="1">Polydeoxyribonucleotide synthase [NAD(+)]</fullName>
    </alternativeName>
</protein>
<organism>
    <name type="scientific">Yersinia pestis bv. Antiqua (strain Antiqua)</name>
    <dbReference type="NCBI Taxonomy" id="360102"/>
    <lineage>
        <taxon>Bacteria</taxon>
        <taxon>Pseudomonadati</taxon>
        <taxon>Pseudomonadota</taxon>
        <taxon>Gammaproteobacteria</taxon>
        <taxon>Enterobacterales</taxon>
        <taxon>Yersiniaceae</taxon>
        <taxon>Yersinia</taxon>
    </lineage>
</organism>
<feature type="chain" id="PRO_0000313524" description="DNA ligase">
    <location>
        <begin position="1"/>
        <end position="670"/>
    </location>
</feature>
<feature type="domain" description="BRCT" evidence="1">
    <location>
        <begin position="592"/>
        <end position="670"/>
    </location>
</feature>
<feature type="active site" description="N6-AMP-lysine intermediate" evidence="1">
    <location>
        <position position="115"/>
    </location>
</feature>
<feature type="binding site" evidence="1">
    <location>
        <begin position="32"/>
        <end position="36"/>
    </location>
    <ligand>
        <name>NAD(+)</name>
        <dbReference type="ChEBI" id="CHEBI:57540"/>
    </ligand>
</feature>
<feature type="binding site" evidence="1">
    <location>
        <begin position="81"/>
        <end position="82"/>
    </location>
    <ligand>
        <name>NAD(+)</name>
        <dbReference type="ChEBI" id="CHEBI:57540"/>
    </ligand>
</feature>
<feature type="binding site" evidence="1">
    <location>
        <position position="113"/>
    </location>
    <ligand>
        <name>NAD(+)</name>
        <dbReference type="ChEBI" id="CHEBI:57540"/>
    </ligand>
</feature>
<feature type="binding site" evidence="1">
    <location>
        <position position="136"/>
    </location>
    <ligand>
        <name>NAD(+)</name>
        <dbReference type="ChEBI" id="CHEBI:57540"/>
    </ligand>
</feature>
<feature type="binding site" evidence="1">
    <location>
        <position position="173"/>
    </location>
    <ligand>
        <name>NAD(+)</name>
        <dbReference type="ChEBI" id="CHEBI:57540"/>
    </ligand>
</feature>
<feature type="binding site" evidence="1">
    <location>
        <position position="290"/>
    </location>
    <ligand>
        <name>NAD(+)</name>
        <dbReference type="ChEBI" id="CHEBI:57540"/>
    </ligand>
</feature>
<feature type="binding site" evidence="1">
    <location>
        <position position="314"/>
    </location>
    <ligand>
        <name>NAD(+)</name>
        <dbReference type="ChEBI" id="CHEBI:57540"/>
    </ligand>
</feature>
<feature type="binding site" evidence="1">
    <location>
        <position position="408"/>
    </location>
    <ligand>
        <name>Zn(2+)</name>
        <dbReference type="ChEBI" id="CHEBI:29105"/>
    </ligand>
</feature>
<feature type="binding site" evidence="1">
    <location>
        <position position="411"/>
    </location>
    <ligand>
        <name>Zn(2+)</name>
        <dbReference type="ChEBI" id="CHEBI:29105"/>
    </ligand>
</feature>
<feature type="binding site" evidence="1">
    <location>
        <position position="426"/>
    </location>
    <ligand>
        <name>Zn(2+)</name>
        <dbReference type="ChEBI" id="CHEBI:29105"/>
    </ligand>
</feature>
<feature type="binding site" evidence="1">
    <location>
        <position position="432"/>
    </location>
    <ligand>
        <name>Zn(2+)</name>
        <dbReference type="ChEBI" id="CHEBI:29105"/>
    </ligand>
</feature>
<comment type="function">
    <text evidence="1">DNA ligase that catalyzes the formation of phosphodiester linkages between 5'-phosphoryl and 3'-hydroxyl groups in double-stranded DNA using NAD as a coenzyme and as the energy source for the reaction. It is essential for DNA replication and repair of damaged DNA.</text>
</comment>
<comment type="catalytic activity">
    <reaction evidence="1">
        <text>NAD(+) + (deoxyribonucleotide)n-3'-hydroxyl + 5'-phospho-(deoxyribonucleotide)m = (deoxyribonucleotide)n+m + AMP + beta-nicotinamide D-nucleotide.</text>
        <dbReference type="EC" id="6.5.1.2"/>
    </reaction>
</comment>
<comment type="cofactor">
    <cofactor evidence="1">
        <name>Mg(2+)</name>
        <dbReference type="ChEBI" id="CHEBI:18420"/>
    </cofactor>
    <cofactor evidence="1">
        <name>Mn(2+)</name>
        <dbReference type="ChEBI" id="CHEBI:29035"/>
    </cofactor>
</comment>
<comment type="similarity">
    <text evidence="1">Belongs to the NAD-dependent DNA ligase family. LigA subfamily.</text>
</comment>
<keyword id="KW-0227">DNA damage</keyword>
<keyword id="KW-0234">DNA repair</keyword>
<keyword id="KW-0235">DNA replication</keyword>
<keyword id="KW-0436">Ligase</keyword>
<keyword id="KW-0460">Magnesium</keyword>
<keyword id="KW-0464">Manganese</keyword>
<keyword id="KW-0479">Metal-binding</keyword>
<keyword id="KW-0520">NAD</keyword>
<keyword id="KW-0862">Zinc</keyword>